<comment type="function">
    <text>May play a role in the interactions between neurites derived from specific subsets of neurons during development.</text>
</comment>
<comment type="subcellular location">
    <subcellularLocation>
        <location evidence="11">Membrane</location>
        <topology evidence="11">Single-pass type I membrane protein</topology>
    </subcellularLocation>
</comment>
<comment type="alternative products">
    <event type="alternative splicing"/>
    <isoform>
        <id>Q8BNA6-1</id>
        <name>1</name>
        <sequence type="displayed"/>
    </isoform>
    <isoform>
        <id>Q8BNA6-2</id>
        <name>2</name>
        <sequence type="described" ref="VSP_032330 VSP_032331"/>
    </isoform>
    <isoform>
        <id>Q8BNA6-3</id>
        <name>3</name>
        <sequence type="described" ref="VSP_032329 VSP_032332 VSP_032333"/>
    </isoform>
</comment>
<comment type="tissue specificity">
    <text evidence="7 8">Restricted to the nervous system, mainly in brain. In brain, it is highly expressed in the olfactory bulb and retina. In the developing olfactory bulb, it localizes along the dendrites of these cells as well as in their axons to some extent. In retina, it cocentrates in the inner plexiform layer throughout development (at protein level).</text>
</comment>
<evidence type="ECO:0000250" key="1"/>
<evidence type="ECO:0000255" key="2"/>
<evidence type="ECO:0000255" key="3">
    <source>
        <dbReference type="PROSITE-ProRule" id="PRU00043"/>
    </source>
</evidence>
<evidence type="ECO:0000255" key="4">
    <source>
        <dbReference type="PROSITE-ProRule" id="PRU00076"/>
    </source>
</evidence>
<evidence type="ECO:0000255" key="5">
    <source>
        <dbReference type="PROSITE-ProRule" id="PRU00122"/>
    </source>
</evidence>
<evidence type="ECO:0000256" key="6">
    <source>
        <dbReference type="SAM" id="MobiDB-lite"/>
    </source>
</evidence>
<evidence type="ECO:0000269" key="7">
    <source>
    </source>
</evidence>
<evidence type="ECO:0000269" key="8">
    <source>
    </source>
</evidence>
<evidence type="ECO:0000303" key="9">
    <source>
    </source>
</evidence>
<evidence type="ECO:0000303" key="10">
    <source>
    </source>
</evidence>
<evidence type="ECO:0000305" key="11"/>
<evidence type="ECO:0007744" key="12">
    <source>
    </source>
</evidence>
<keyword id="KW-0025">Alternative splicing</keyword>
<keyword id="KW-0106">Calcium</keyword>
<keyword id="KW-0130">Cell adhesion</keyword>
<keyword id="KW-0217">Developmental protein</keyword>
<keyword id="KW-1015">Disulfide bond</keyword>
<keyword id="KW-0245">EGF-like domain</keyword>
<keyword id="KW-0325">Glycoprotein</keyword>
<keyword id="KW-0472">Membrane</keyword>
<keyword id="KW-0488">Methylation</keyword>
<keyword id="KW-1185">Reference proteome</keyword>
<keyword id="KW-0677">Repeat</keyword>
<keyword id="KW-0732">Signal</keyword>
<keyword id="KW-0812">Transmembrane</keyword>
<keyword id="KW-1133">Transmembrane helix</keyword>
<protein>
    <recommendedName>
        <fullName>Protocadherin Fat 3</fullName>
    </recommendedName>
    <alternativeName>
        <fullName>FAT tumor suppressor homolog 3</fullName>
    </alternativeName>
</protein>
<proteinExistence type="evidence at protein level"/>
<name>FAT3_MOUSE</name>
<gene>
    <name type="primary">Fat3</name>
    <name type="synonym">Gm1132</name>
    <name type="synonym">Gm510</name>
</gene>
<accession>Q8BNA6</accession>
<accession>Q08ED4</accession>
<dbReference type="EMBL" id="AC154406">
    <property type="status" value="NOT_ANNOTATED_CDS"/>
    <property type="molecule type" value="Genomic_DNA"/>
</dbReference>
<dbReference type="EMBL" id="AC154741">
    <property type="status" value="NOT_ANNOTATED_CDS"/>
    <property type="molecule type" value="Genomic_DNA"/>
</dbReference>
<dbReference type="EMBL" id="AC161370">
    <property type="status" value="NOT_ANNOTATED_CDS"/>
    <property type="molecule type" value="Genomic_DNA"/>
</dbReference>
<dbReference type="EMBL" id="AC161421">
    <property type="status" value="NOT_ANNOTATED_CDS"/>
    <property type="molecule type" value="Genomic_DNA"/>
</dbReference>
<dbReference type="EMBL" id="AC162903">
    <property type="status" value="NOT_ANNOTATED_CDS"/>
    <property type="molecule type" value="Genomic_DNA"/>
</dbReference>
<dbReference type="EMBL" id="BC117744">
    <property type="protein sequence ID" value="AAI17745.1"/>
    <property type="molecule type" value="mRNA"/>
</dbReference>
<dbReference type="EMBL" id="AK084245">
    <property type="protein sequence ID" value="BAC39147.1"/>
    <property type="molecule type" value="mRNA"/>
</dbReference>
<dbReference type="CCDS" id="CCDS40539.2">
    <molecule id="Q8BNA6-1"/>
</dbReference>
<dbReference type="RefSeq" id="NP_001074283.2">
    <molecule id="Q8BNA6-1"/>
    <property type="nucleotide sequence ID" value="NM_001080814.2"/>
</dbReference>
<dbReference type="SMR" id="Q8BNA6"/>
<dbReference type="FunCoup" id="Q8BNA6">
    <property type="interactions" value="278"/>
</dbReference>
<dbReference type="IntAct" id="Q8BNA6">
    <property type="interactions" value="2"/>
</dbReference>
<dbReference type="MINT" id="Q8BNA6"/>
<dbReference type="STRING" id="10090.ENSMUSP00000080808"/>
<dbReference type="GlyConnect" id="2655">
    <property type="glycosylation" value="2 N-Linked glycans (3 sites)"/>
</dbReference>
<dbReference type="GlyCosmos" id="Q8BNA6">
    <property type="glycosylation" value="26 sites, 2 glycans"/>
</dbReference>
<dbReference type="GlyGen" id="Q8BNA6">
    <property type="glycosylation" value="26 sites, 8 N-linked glycans (11 sites)"/>
</dbReference>
<dbReference type="iPTMnet" id="Q8BNA6"/>
<dbReference type="PhosphoSitePlus" id="Q8BNA6"/>
<dbReference type="jPOST" id="Q8BNA6"/>
<dbReference type="PaxDb" id="10090-ENSMUSP00000080808"/>
<dbReference type="ProteomicsDB" id="271553">
    <molecule id="Q8BNA6-1"/>
</dbReference>
<dbReference type="ProteomicsDB" id="271554">
    <molecule id="Q8BNA6-2"/>
</dbReference>
<dbReference type="ProteomicsDB" id="271555">
    <molecule id="Q8BNA6-3"/>
</dbReference>
<dbReference type="Pumba" id="Q8BNA6"/>
<dbReference type="Antibodypedia" id="8386">
    <property type="antibodies" value="67 antibodies from 14 providers"/>
</dbReference>
<dbReference type="Ensembl" id="ENSMUST00000217308.3">
    <molecule id="Q8BNA6-1"/>
    <property type="protein sequence ID" value="ENSMUSP00000148968.3"/>
    <property type="gene ID" value="ENSMUSG00000074505.7"/>
</dbReference>
<dbReference type="GeneID" id="270120"/>
<dbReference type="UCSC" id="uc009ogj.1">
    <molecule id="Q8BNA6-1"/>
    <property type="organism name" value="mouse"/>
</dbReference>
<dbReference type="UCSC" id="uc009ogk.1">
    <molecule id="Q8BNA6-3"/>
    <property type="organism name" value="mouse"/>
</dbReference>
<dbReference type="AGR" id="MGI:2444314"/>
<dbReference type="MGI" id="MGI:2444314">
    <property type="gene designation" value="Fat3"/>
</dbReference>
<dbReference type="VEuPathDB" id="HostDB:ENSMUSG00000074505"/>
<dbReference type="eggNOG" id="KOG1219">
    <property type="taxonomic scope" value="Eukaryota"/>
</dbReference>
<dbReference type="GeneTree" id="ENSGT00940000154981"/>
<dbReference type="InParanoid" id="Q8BNA6"/>
<dbReference type="OMA" id="YSSLYYE"/>
<dbReference type="OrthoDB" id="6252479at2759"/>
<dbReference type="PhylomeDB" id="Q8BNA6"/>
<dbReference type="ChiTaRS" id="Fat3">
    <property type="organism name" value="mouse"/>
</dbReference>
<dbReference type="PRO" id="PR:Q8BNA6"/>
<dbReference type="Proteomes" id="UP000000589">
    <property type="component" value="Chromosome 9"/>
</dbReference>
<dbReference type="RNAct" id="Q8BNA6">
    <property type="molecule type" value="protein"/>
</dbReference>
<dbReference type="Bgee" id="ENSMUSG00000074505">
    <property type="expression patterns" value="Expressed in habenula and 213 other cell types or tissues"/>
</dbReference>
<dbReference type="ExpressionAtlas" id="Q8BNA6">
    <property type="expression patterns" value="baseline and differential"/>
</dbReference>
<dbReference type="GO" id="GO:0030425">
    <property type="term" value="C:dendrite"/>
    <property type="evidence" value="ECO:0000314"/>
    <property type="project" value="MGI"/>
</dbReference>
<dbReference type="GO" id="GO:0005886">
    <property type="term" value="C:plasma membrane"/>
    <property type="evidence" value="ECO:0007669"/>
    <property type="project" value="InterPro"/>
</dbReference>
<dbReference type="GO" id="GO:0005509">
    <property type="term" value="F:calcium ion binding"/>
    <property type="evidence" value="ECO:0007669"/>
    <property type="project" value="InterPro"/>
</dbReference>
<dbReference type="GO" id="GO:0048667">
    <property type="term" value="P:cell morphogenesis involved in neuron differentiation"/>
    <property type="evidence" value="ECO:0000315"/>
    <property type="project" value="MGI"/>
</dbReference>
<dbReference type="GO" id="GO:0016358">
    <property type="term" value="P:dendrite development"/>
    <property type="evidence" value="ECO:0000315"/>
    <property type="project" value="MGI"/>
</dbReference>
<dbReference type="GO" id="GO:0007156">
    <property type="term" value="P:homophilic cell adhesion via plasma membrane adhesion molecules"/>
    <property type="evidence" value="ECO:0007669"/>
    <property type="project" value="InterPro"/>
</dbReference>
<dbReference type="GO" id="GO:1904936">
    <property type="term" value="P:interneuron migration"/>
    <property type="evidence" value="ECO:0000315"/>
    <property type="project" value="MGI"/>
</dbReference>
<dbReference type="GO" id="GO:2000171">
    <property type="term" value="P:negative regulation of dendrite development"/>
    <property type="evidence" value="ECO:0000315"/>
    <property type="project" value="MGI"/>
</dbReference>
<dbReference type="GO" id="GO:0010842">
    <property type="term" value="P:retina layer formation"/>
    <property type="evidence" value="ECO:0000316"/>
    <property type="project" value="MGI"/>
</dbReference>
<dbReference type="CDD" id="cd11304">
    <property type="entry name" value="Cadherin_repeat"/>
    <property type="match status" value="33"/>
</dbReference>
<dbReference type="CDD" id="cd00054">
    <property type="entry name" value="EGF_CA"/>
    <property type="match status" value="3"/>
</dbReference>
<dbReference type="CDD" id="cd00110">
    <property type="entry name" value="LamG"/>
    <property type="match status" value="1"/>
</dbReference>
<dbReference type="FunFam" id="2.60.40.60:FF:000013">
    <property type="entry name" value="Cadherin EGF LAG seven-pass G-type receptor"/>
    <property type="match status" value="2"/>
</dbReference>
<dbReference type="FunFam" id="2.60.40.60:FF:000015">
    <property type="entry name" value="FAT atypical cadherin 1"/>
    <property type="match status" value="1"/>
</dbReference>
<dbReference type="FunFam" id="2.60.40.60:FF:000021">
    <property type="entry name" value="FAT atypical cadherin 1"/>
    <property type="match status" value="3"/>
</dbReference>
<dbReference type="FunFam" id="2.60.40.60:FF:000026">
    <property type="entry name" value="FAT atypical cadherin 1"/>
    <property type="match status" value="2"/>
</dbReference>
<dbReference type="FunFam" id="2.60.40.60:FF:000032">
    <property type="entry name" value="FAT atypical cadherin 1"/>
    <property type="match status" value="1"/>
</dbReference>
<dbReference type="FunFam" id="2.60.40.60:FF:000033">
    <property type="entry name" value="FAT atypical cadherin 1"/>
    <property type="match status" value="1"/>
</dbReference>
<dbReference type="FunFam" id="2.60.40.60:FF:000037">
    <property type="entry name" value="FAT atypical cadherin 1"/>
    <property type="match status" value="1"/>
</dbReference>
<dbReference type="FunFam" id="2.60.40.60:FF:000041">
    <property type="entry name" value="FAT atypical cadherin 1"/>
    <property type="match status" value="1"/>
</dbReference>
<dbReference type="FunFam" id="2.60.40.60:FF:000051">
    <property type="entry name" value="FAT atypical cadherin 1"/>
    <property type="match status" value="1"/>
</dbReference>
<dbReference type="FunFam" id="2.60.40.60:FF:000052">
    <property type="entry name" value="FAT atypical cadherin 1"/>
    <property type="match status" value="1"/>
</dbReference>
<dbReference type="FunFam" id="2.60.40.60:FF:000064">
    <property type="entry name" value="FAT atypical cadherin 1"/>
    <property type="match status" value="1"/>
</dbReference>
<dbReference type="FunFam" id="2.60.40.60:FF:000065">
    <property type="entry name" value="FAT atypical cadherin 1"/>
    <property type="match status" value="1"/>
</dbReference>
<dbReference type="FunFam" id="2.60.40.60:FF:000066">
    <property type="entry name" value="FAT atypical cadherin 1"/>
    <property type="match status" value="1"/>
</dbReference>
<dbReference type="FunFam" id="2.60.40.60:FF:000067">
    <property type="entry name" value="FAT atypical cadherin 1"/>
    <property type="match status" value="1"/>
</dbReference>
<dbReference type="FunFam" id="2.60.40.60:FF:000071">
    <property type="entry name" value="FAT atypical cadherin 1"/>
    <property type="match status" value="1"/>
</dbReference>
<dbReference type="FunFam" id="2.60.40.60:FF:000075">
    <property type="entry name" value="FAT atypical cadherin 1"/>
    <property type="match status" value="1"/>
</dbReference>
<dbReference type="FunFam" id="2.60.40.60:FF:000079">
    <property type="entry name" value="FAT atypical cadherin 1"/>
    <property type="match status" value="1"/>
</dbReference>
<dbReference type="FunFam" id="2.60.40.60:FF:000080">
    <property type="entry name" value="FAT atypical cadherin 1"/>
    <property type="match status" value="1"/>
</dbReference>
<dbReference type="FunFam" id="2.10.25.10:FF:000165">
    <property type="entry name" value="FAT atypical cadherin 3"/>
    <property type="match status" value="1"/>
</dbReference>
<dbReference type="FunFam" id="2.10.25.10:FF:000172">
    <property type="entry name" value="FAT atypical cadherin 3"/>
    <property type="match status" value="1"/>
</dbReference>
<dbReference type="FunFam" id="2.60.120.200:FF:000035">
    <property type="entry name" value="FAT atypical cadherin 3"/>
    <property type="match status" value="1"/>
</dbReference>
<dbReference type="FunFam" id="2.60.40.60:FF:000024">
    <property type="entry name" value="FAT atypical cadherin 3"/>
    <property type="match status" value="1"/>
</dbReference>
<dbReference type="FunFam" id="2.60.40.60:FF:000039">
    <property type="entry name" value="FAT atypical cadherin 3"/>
    <property type="match status" value="1"/>
</dbReference>
<dbReference type="FunFam" id="2.60.40.60:FF:000053">
    <property type="entry name" value="FAT atypical cadherin 3"/>
    <property type="match status" value="1"/>
</dbReference>
<dbReference type="FunFam" id="2.60.40.60:FF:000058">
    <property type="entry name" value="FAT atypical cadherin 3"/>
    <property type="match status" value="1"/>
</dbReference>
<dbReference type="FunFam" id="2.60.40.60:FF:000059">
    <property type="entry name" value="FAT atypical cadherin 3"/>
    <property type="match status" value="1"/>
</dbReference>
<dbReference type="FunFam" id="2.60.40.60:FF:000061">
    <property type="entry name" value="FAT atypical cadherin 3"/>
    <property type="match status" value="2"/>
</dbReference>
<dbReference type="FunFam" id="2.60.40.60:FF:000084">
    <property type="entry name" value="FAT atypical cadherin 3"/>
    <property type="match status" value="1"/>
</dbReference>
<dbReference type="FunFam" id="2.60.40.60:FF:000090">
    <property type="entry name" value="FAT atypical cadherin 3"/>
    <property type="match status" value="1"/>
</dbReference>
<dbReference type="FunFam" id="2.60.40.60:FF:000165">
    <property type="entry name" value="FAT atypical cadherin 3"/>
    <property type="match status" value="1"/>
</dbReference>
<dbReference type="FunFam" id="2.60.40.60:FF:000370">
    <property type="entry name" value="FAT atypical cadherin 3"/>
    <property type="match status" value="1"/>
</dbReference>
<dbReference type="FunFam" id="2.60.40.60:FF:000035">
    <property type="entry name" value="Protocadherin Fat 3"/>
    <property type="match status" value="1"/>
</dbReference>
<dbReference type="Gene3D" id="2.60.120.200">
    <property type="match status" value="1"/>
</dbReference>
<dbReference type="Gene3D" id="2.60.40.60">
    <property type="entry name" value="Cadherins"/>
    <property type="match status" value="34"/>
</dbReference>
<dbReference type="Gene3D" id="2.10.25.10">
    <property type="entry name" value="Laminin"/>
    <property type="match status" value="3"/>
</dbReference>
<dbReference type="InterPro" id="IPR039808">
    <property type="entry name" value="Cadherin"/>
</dbReference>
<dbReference type="InterPro" id="IPR002126">
    <property type="entry name" value="Cadherin-like_dom"/>
</dbReference>
<dbReference type="InterPro" id="IPR015919">
    <property type="entry name" value="Cadherin-like_sf"/>
</dbReference>
<dbReference type="InterPro" id="IPR020894">
    <property type="entry name" value="Cadherin_CS"/>
</dbReference>
<dbReference type="InterPro" id="IPR013320">
    <property type="entry name" value="ConA-like_dom_sf"/>
</dbReference>
<dbReference type="InterPro" id="IPR001881">
    <property type="entry name" value="EGF-like_Ca-bd_dom"/>
</dbReference>
<dbReference type="InterPro" id="IPR013032">
    <property type="entry name" value="EGF-like_CS"/>
</dbReference>
<dbReference type="InterPro" id="IPR000742">
    <property type="entry name" value="EGF-like_dom"/>
</dbReference>
<dbReference type="InterPro" id="IPR000152">
    <property type="entry name" value="EGF-type_Asp/Asn_hydroxyl_site"/>
</dbReference>
<dbReference type="InterPro" id="IPR018097">
    <property type="entry name" value="EGF_Ca-bd_CS"/>
</dbReference>
<dbReference type="InterPro" id="IPR001791">
    <property type="entry name" value="Laminin_G"/>
</dbReference>
<dbReference type="PANTHER" id="PTHR24027:SF438">
    <property type="entry name" value="CADHERIN 23"/>
    <property type="match status" value="1"/>
</dbReference>
<dbReference type="PANTHER" id="PTHR24027">
    <property type="entry name" value="CADHERIN-23"/>
    <property type="match status" value="1"/>
</dbReference>
<dbReference type="Pfam" id="PF00028">
    <property type="entry name" value="Cadherin"/>
    <property type="match status" value="27"/>
</dbReference>
<dbReference type="Pfam" id="PF00008">
    <property type="entry name" value="EGF"/>
    <property type="match status" value="1"/>
</dbReference>
<dbReference type="Pfam" id="PF12661">
    <property type="entry name" value="hEGF"/>
    <property type="match status" value="1"/>
</dbReference>
<dbReference type="Pfam" id="PF02210">
    <property type="entry name" value="Laminin_G_2"/>
    <property type="match status" value="1"/>
</dbReference>
<dbReference type="PRINTS" id="PR00205">
    <property type="entry name" value="CADHERIN"/>
</dbReference>
<dbReference type="SMART" id="SM00112">
    <property type="entry name" value="CA"/>
    <property type="match status" value="32"/>
</dbReference>
<dbReference type="SMART" id="SM00181">
    <property type="entry name" value="EGF"/>
    <property type="match status" value="4"/>
</dbReference>
<dbReference type="SMART" id="SM00179">
    <property type="entry name" value="EGF_CA"/>
    <property type="match status" value="3"/>
</dbReference>
<dbReference type="SMART" id="SM00282">
    <property type="entry name" value="LamG"/>
    <property type="match status" value="1"/>
</dbReference>
<dbReference type="SUPFAM" id="SSF49313">
    <property type="entry name" value="Cadherin-like"/>
    <property type="match status" value="34"/>
</dbReference>
<dbReference type="SUPFAM" id="SSF49899">
    <property type="entry name" value="Concanavalin A-like lectins/glucanases"/>
    <property type="match status" value="1"/>
</dbReference>
<dbReference type="SUPFAM" id="SSF57196">
    <property type="entry name" value="EGF/Laminin"/>
    <property type="match status" value="3"/>
</dbReference>
<dbReference type="PROSITE" id="PS00010">
    <property type="entry name" value="ASX_HYDROXYL"/>
    <property type="match status" value="1"/>
</dbReference>
<dbReference type="PROSITE" id="PS00232">
    <property type="entry name" value="CADHERIN_1"/>
    <property type="match status" value="19"/>
</dbReference>
<dbReference type="PROSITE" id="PS50268">
    <property type="entry name" value="CADHERIN_2"/>
    <property type="match status" value="32"/>
</dbReference>
<dbReference type="PROSITE" id="PS00022">
    <property type="entry name" value="EGF_1"/>
    <property type="match status" value="3"/>
</dbReference>
<dbReference type="PROSITE" id="PS01186">
    <property type="entry name" value="EGF_2"/>
    <property type="match status" value="1"/>
</dbReference>
<dbReference type="PROSITE" id="PS50026">
    <property type="entry name" value="EGF_3"/>
    <property type="match status" value="4"/>
</dbReference>
<dbReference type="PROSITE" id="PS01187">
    <property type="entry name" value="EGF_CA"/>
    <property type="match status" value="1"/>
</dbReference>
<dbReference type="PROSITE" id="PS50025">
    <property type="entry name" value="LAM_G_DOMAIN"/>
    <property type="match status" value="1"/>
</dbReference>
<sequence>MSVTMGHCMGTKPPSCIILLLLKLFATVSQGLPGTGPLGFHFTHSTYNATVYENSAARTYVNSQSRMGITLIDLSWDIKYRIVSGDEEGFFKAEEVIIADFCFLRIRTKGGNSAILNREIQDNYLLIIKGSVRGEDLEAWTKVNIQVLDMNDLRPLFSPTTYSVTIAESTPLRTSVAQVTATDADIGSNGEFYYYFKNKVDLFSVHPTSGVISLSGRLNYDEKNRYDLEILAVDRGMKLYGNNGVSSTAKLYVHIERINEHAPIIHVVSHTPFSLDKEPTYAVVTVDDLDEGANGEIESLSIVDGDPLEQFFLAKEGKWLNEYKVKERRQVDWESFSYGYNLTIQAKDKGSPQKFSELKTVHIANPRRDNTPVRFEKDVYEVSISEFSPPGVLVAIVKVSPEPLDVEYKLLPGKDSDYFKINPRSGLIVTAQPLNTVKKEVYKLEVSDKEGDAKAQVTIGIEDANDHTPEFQEALYETFVNESVRVGTNVLTVSASDKDKGENGYITYSIASLNLLPFAINQFTGVISTTEELDFESSPETYRFIVRASDWGSPYRHESEVNVTIRVGNVNDNSPLFEKVACQGVISYDFPVGGHITAISAIDIDELELVKYKIISGNELGFFYLNPDSGVLQLKKSLMNSGIKNGNFALRITATDGENFADPMAINISVLHGKVSSKSFSCRETRVAQKLAEKLLIKAKANGKLNLEDGFLDFYSINRQGPHFDKSFPSDVAVKEDMLVGTNILKIKAYDADSGFNGKVLFTISDGNTDSCFNIDMETGQLKVLMPMDREHTDLYVLNITIYDLGKPQKSSWRLLTVNVEDANDNNPVFLQDSYSVSILESSSIGTEIIQVEARDKDLGSNGEVMYSVLTDTHQFIINSSTGIVYIADQLDRESKANYSLKIEARDKAESGQQLFSVVTLKIFLDDVNDCSPAFIPSSYSVKVLEDLPVGTVIAWLETQDPDLGLGGQVRYSLVNDYNGRFEVDKASGAIRLSKELDYEKQQFYNLTVRAKDKGRPVSLSSVSFVEVEVVDVNENLHTPYFPDFAVVGSVKENSRIGTSVLQVTAHDEDSGRDGEIQYSIRDGSGLGRFNIDDESGVITAADSLDRETTASYWLTVYATDRGVVPLYSTIEVYIEVEDVNDNAPLTSEPIYYPVVMENSPKDVSVIQIQAEDPDSGSNEKLTYRITSGNPQNFFAINIKTGLITTTSRKLDREQQAEHFLEVTVTDGGSSPKQSTIWVVVQVLDENDNRPQFPEKVYQIKLPERDRKKRGEPIYRAFAFDKDEGPNAEISYSIVDGNDDGKFFIDPKTGMVSSRKQFTAGSYDILTIKAVDNGRPQKSSTARLHIEWIKKPPPSPIPLTFDEPFYNFTVMESDKVTEIVGVVSVQPANTPLWFDIVGGNFDSSFDAEKGVGTIVIAKPLDAEQRSVYNMSVEVTDGTNIAVTQVFIKVLDNNDNGPEFSQPHYDVTISEDVLPDTEILQIEATDRDEKHKLSYTIHSSIDAVSMRKFRMDPSTGVLYTAERLDHEAQDKHILNIMVRDQEFPYRRNLARVIVNVEDANDHSPYFTNPLYEASVFESAALGSVVLQVTALDKDKGENAELIYSIEAGNTGNTFKIEPVLGIITISKEPDMAAMGQFVLSVKVTDQGSPPMSATAIVRISISMSDNSHPKFTHKDYQAEVNENVDIGTSVILISAISQSTLIYEVKDGNINGVFTINPYSGVITTRRALDYEHTSSYQLIIQATNMAGMASNATISVQIVDENDNPPVFLFSQYSGSLSEAAPINSIVRSLDNSPLVIRATDADSNQNALLVYQIVESTAKKFFTVDSSTGAIRTIANLDHEAIAHFHFHVHVRDSGNPQLTAESPVEVNIEVTDVNDNPPVFTQAVFETVLLLPTYIGVEVLKVSATDPDSEVPPELTYSLMEGSVDNFLMDPNTGVLTIKNNNLSKDHYMLIVRVSDGKFYSTAMVTVMVKEAMDSGLHFTQSFYSTSISENSTNITKVAIVNAVGNRLNEPLKYSILNPGNKFKIKSTSGVIQTTGVPFDREEQELYELVVEASRELDHLRVARVVVRVNIEDVNDNSPVFVGLPYYAAVQVDAEPGTLIYRVTAIDKDKGANGEVTYVLQDDYGHFEINPNSGNVILREAFNSDLSNIDYGVTILAKDGGNPSLSTFVELPITIVNKAMPVFDKPFYTASINEDITMNTPILSINATSPEGQGIIYLIIDGDPFQQFNIDFDTGVLKVISPLDYEVTSVYKLTVRASDALTGARAEVTVDLLVDDINDNPPVFDQPTYNTTLSESSLIGTPVLQLVSTDADSGNNKLVRYQIVQDTYNSTDYFHIDSSSGLILTARMLDHELVQHCTLKVTATDNGFPSLSSEVLVQIYISDVNDNPPVFNQLIYESYVSELAPRGHFVTCVQASDADSSDLDRLEYSILSGNDRASFLMDSKSGVLTLSSHRKQRMEPLYSLNVSVSDGLFTSTAQVHIRVLGANLYSPAFSQSTYVAEVRENAASGTKVIHVRATDGDPGTYGQVSYSIINDFAKDRFLIDSNGQIITTERLDRENPLEGDISIYLRALDGGGRTTFCTVRVIVVDENDNAPQFMTVEYRASVRADVGRGHLVTQVQALDPDDGANSRITYSLYSEASVSVADLLEIDPDNGWMVTKGNFNQLRNTVLSFFVKAVDGGIPVRHSLIPVYIHVLPPETFLPSFTQSQYSFTITEDTSIGSTVDTLRILPNQSVRFSMVNGERPENNKEGVFIIEQETGAIKLDKRLDHEVSPAFHFKVAATIPLDKVDIVFTVDVDVKVLDLNDNKPVFETSTYETIIMEGMPVGTKLAQVRAIDMDWGANGQVTYSLHSDSHLEKVIEAFNIDSNTGWISTLKDLDHETDPAFSFFVVASDLGEAFSLSSMALVSVKVTDINDNAPVFAHEVYRGNVKESDPPGEVVAVLSTLDKDTSNINRQVSYHITGGNPRGQFALGMVQSEWKVYVKRPLDREEQDIYFLNITASDGLFVTQAMVEVTVSDVNDNSPVCDQVAYSASLPEDIPSNKIILKVSAKDADIGSNGDIRYSLYGSGNNEFFLDPESGELKTLAVLDRERVPVYNLIARATDGGGRFCSSSVLLLLEDVNDNPPVFSSNHYTACVYENTATKALLTRVQAMDPDVGINRKVVYSLEDSASGVFSIDSSSGVIVLEQPLDREQQSSYNISVRATDQSPGQSLSSLASVTITVLDINDNPPVFERRDYLVTVPEDTSLGTQVLSVFATSKDIGTNAEITYLIRSGNEQGKFSINPKTGGISVLEALDYETCRRFYLVVEAKDGGTPALSTAATVSIDLTDVNDNPPRFSQDVYSAVISEDALEGDSVILLIAEDVDSKPNGQIRFSIVGGDRDNEFAVDPILGLVKVKKKLDRERVSGYSLLIQAVDSGIPAMSSTTTVNIDISDVNDNSPVFTPANYTAVIQENKPVGTSILQLVVTDRDSFHNGPPFSFSILSGNEDEEFMLDSHGILRSAVVFRHMESPEYLLCIQAKDSGKPQQVSHTYIRVRVIEESTHKPTAIPLEIFIVTMEDDFPGGVIGKIHATDQDMYDVLTFALKSEQKSLFKVNSHDGKIIALGGLDSGKYVLNVSVSDGRFQVPIDVVVHVEQLVHEMLQNTVTIRFEDVSPEDFVGLHMHGFRRILRNAVLTQKQDSLRIISIQPVVGTNQLDMLFAVEMHSSEFYKPAYLIQKLSNARRHLENVMHIAAILEKNCSGLDCQEQHCEQGLSLDSHALMTYSTARISFVCPRFYRNVRCTCNGGVCPGSNDPCVEKPCPEDMQCVGYEASRRPFLCQCPPGKLGECSGHTSLSFAGNSYIKYRLSENSKEEDFKLALRLRTLQSNGIIMYTRANPCMILKIVEGKLWFQLDCGSGPGILGISSRAVNDGSWHSVFLELNRNFTSLALDDSYVERRRAPLYFQTLSTDSAIFFGALVQADNVRSLTDTRVTQVLGGFQGCLDSVVLNHYELPLQNKRSSFAEVVGLTELKLGCVLYPDACQRSPCLHGGSCSSLPSGGYQCSCLSQFTGTNCESEITACFPNPCRNGGSCDPIGNTFVCSCKAGLTGVTCEDDVDECEREECENGGSCVNLFGSFFCNCTPGYVGQYCGLRPVVVPNIQAGHSYVGKEELIGIAVVLFVIFTLIVLFIVFRKKVFRKNYSRNNITLVQDPATAALLHKSNGIPFRSLRAGDGRNVYQEVGPPQVPVRPMAYTPCFQSDSRSNLDKGLDVLGGEPQEMSTFHPESPRILTARRGVVVCSVAPNLPAVSPCRSDCDSIRKNGWDTGSENKGTEDTGEVTCFTNSNKGSNSEVQSLSSFQSDSGDDNAYHWDTSDWMPGARLSDIEEMPNYESQDGGAAHQGSTRELESDYYLGGYDIDSEYPPPHEEEFLSRDQLPPPLPEDFPDQYEALPPSQPTSLTSTMSPDCRRRPRFHPSQYLPPHPLPGETDLGGPSSSCDFSTFAVNMNQGTEVMAPTDSVSLSLHNSRGTSSSEMSARCGFDDSEVAMSDYESAGELSLTNLHIPFVETQQQTQV</sequence>
<reference key="1">
    <citation type="journal article" date="2009" name="PLoS Biol.">
        <title>Lineage-specific biology revealed by a finished genome assembly of the mouse.</title>
        <authorList>
            <person name="Church D.M."/>
            <person name="Goodstadt L."/>
            <person name="Hillier L.W."/>
            <person name="Zody M.C."/>
            <person name="Goldstein S."/>
            <person name="She X."/>
            <person name="Bult C.J."/>
            <person name="Agarwala R."/>
            <person name="Cherry J.L."/>
            <person name="DiCuccio M."/>
            <person name="Hlavina W."/>
            <person name="Kapustin Y."/>
            <person name="Meric P."/>
            <person name="Maglott D."/>
            <person name="Birtle Z."/>
            <person name="Marques A.C."/>
            <person name="Graves T."/>
            <person name="Zhou S."/>
            <person name="Teague B."/>
            <person name="Potamousis K."/>
            <person name="Churas C."/>
            <person name="Place M."/>
            <person name="Herschleb J."/>
            <person name="Runnheim R."/>
            <person name="Forrest D."/>
            <person name="Amos-Landgraf J."/>
            <person name="Schwartz D.C."/>
            <person name="Cheng Z."/>
            <person name="Lindblad-Toh K."/>
            <person name="Eichler E.E."/>
            <person name="Ponting C.P."/>
        </authorList>
    </citation>
    <scope>NUCLEOTIDE SEQUENCE [LARGE SCALE GENOMIC DNA]</scope>
    <source>
        <strain>C57BL/6J</strain>
    </source>
</reference>
<reference key="2">
    <citation type="journal article" date="2004" name="Genome Res.">
        <title>The status, quality, and expansion of the NIH full-length cDNA project: the Mammalian Gene Collection (MGC).</title>
        <authorList>
            <consortium name="The MGC Project Team"/>
        </authorList>
    </citation>
    <scope>NUCLEOTIDE SEQUENCE [LARGE SCALE MRNA] (ISOFORM 3)</scope>
</reference>
<reference key="3">
    <citation type="journal article" date="2005" name="Science">
        <title>The transcriptional landscape of the mammalian genome.</title>
        <authorList>
            <person name="Carninci P."/>
            <person name="Kasukawa T."/>
            <person name="Katayama S."/>
            <person name="Gough J."/>
            <person name="Frith M.C."/>
            <person name="Maeda N."/>
            <person name="Oyama R."/>
            <person name="Ravasi T."/>
            <person name="Lenhard B."/>
            <person name="Wells C."/>
            <person name="Kodzius R."/>
            <person name="Shimokawa K."/>
            <person name="Bajic V.B."/>
            <person name="Brenner S.E."/>
            <person name="Batalov S."/>
            <person name="Forrest A.R."/>
            <person name="Zavolan M."/>
            <person name="Davis M.J."/>
            <person name="Wilming L.G."/>
            <person name="Aidinis V."/>
            <person name="Allen J.E."/>
            <person name="Ambesi-Impiombato A."/>
            <person name="Apweiler R."/>
            <person name="Aturaliya R.N."/>
            <person name="Bailey T.L."/>
            <person name="Bansal M."/>
            <person name="Baxter L."/>
            <person name="Beisel K.W."/>
            <person name="Bersano T."/>
            <person name="Bono H."/>
            <person name="Chalk A.M."/>
            <person name="Chiu K.P."/>
            <person name="Choudhary V."/>
            <person name="Christoffels A."/>
            <person name="Clutterbuck D.R."/>
            <person name="Crowe M.L."/>
            <person name="Dalla E."/>
            <person name="Dalrymple B.P."/>
            <person name="de Bono B."/>
            <person name="Della Gatta G."/>
            <person name="di Bernardo D."/>
            <person name="Down T."/>
            <person name="Engstrom P."/>
            <person name="Fagiolini M."/>
            <person name="Faulkner G."/>
            <person name="Fletcher C.F."/>
            <person name="Fukushima T."/>
            <person name="Furuno M."/>
            <person name="Futaki S."/>
            <person name="Gariboldi M."/>
            <person name="Georgii-Hemming P."/>
            <person name="Gingeras T.R."/>
            <person name="Gojobori T."/>
            <person name="Green R.E."/>
            <person name="Gustincich S."/>
            <person name="Harbers M."/>
            <person name="Hayashi Y."/>
            <person name="Hensch T.K."/>
            <person name="Hirokawa N."/>
            <person name="Hill D."/>
            <person name="Huminiecki L."/>
            <person name="Iacono M."/>
            <person name="Ikeo K."/>
            <person name="Iwama A."/>
            <person name="Ishikawa T."/>
            <person name="Jakt M."/>
            <person name="Kanapin A."/>
            <person name="Katoh M."/>
            <person name="Kawasawa Y."/>
            <person name="Kelso J."/>
            <person name="Kitamura H."/>
            <person name="Kitano H."/>
            <person name="Kollias G."/>
            <person name="Krishnan S.P."/>
            <person name="Kruger A."/>
            <person name="Kummerfeld S.K."/>
            <person name="Kurochkin I.V."/>
            <person name="Lareau L.F."/>
            <person name="Lazarevic D."/>
            <person name="Lipovich L."/>
            <person name="Liu J."/>
            <person name="Liuni S."/>
            <person name="McWilliam S."/>
            <person name="Madan Babu M."/>
            <person name="Madera M."/>
            <person name="Marchionni L."/>
            <person name="Matsuda H."/>
            <person name="Matsuzawa S."/>
            <person name="Miki H."/>
            <person name="Mignone F."/>
            <person name="Miyake S."/>
            <person name="Morris K."/>
            <person name="Mottagui-Tabar S."/>
            <person name="Mulder N."/>
            <person name="Nakano N."/>
            <person name="Nakauchi H."/>
            <person name="Ng P."/>
            <person name="Nilsson R."/>
            <person name="Nishiguchi S."/>
            <person name="Nishikawa S."/>
            <person name="Nori F."/>
            <person name="Ohara O."/>
            <person name="Okazaki Y."/>
            <person name="Orlando V."/>
            <person name="Pang K.C."/>
            <person name="Pavan W.J."/>
            <person name="Pavesi G."/>
            <person name="Pesole G."/>
            <person name="Petrovsky N."/>
            <person name="Piazza S."/>
            <person name="Reed J."/>
            <person name="Reid J.F."/>
            <person name="Ring B.Z."/>
            <person name="Ringwald M."/>
            <person name="Rost B."/>
            <person name="Ruan Y."/>
            <person name="Salzberg S.L."/>
            <person name="Sandelin A."/>
            <person name="Schneider C."/>
            <person name="Schoenbach C."/>
            <person name="Sekiguchi K."/>
            <person name="Semple C.A."/>
            <person name="Seno S."/>
            <person name="Sessa L."/>
            <person name="Sheng Y."/>
            <person name="Shibata Y."/>
            <person name="Shimada H."/>
            <person name="Shimada K."/>
            <person name="Silva D."/>
            <person name="Sinclair B."/>
            <person name="Sperling S."/>
            <person name="Stupka E."/>
            <person name="Sugiura K."/>
            <person name="Sultana R."/>
            <person name="Takenaka Y."/>
            <person name="Taki K."/>
            <person name="Tammoja K."/>
            <person name="Tan S.L."/>
            <person name="Tang S."/>
            <person name="Taylor M.S."/>
            <person name="Tegner J."/>
            <person name="Teichmann S.A."/>
            <person name="Ueda H.R."/>
            <person name="van Nimwegen E."/>
            <person name="Verardo R."/>
            <person name="Wei C.L."/>
            <person name="Yagi K."/>
            <person name="Yamanishi H."/>
            <person name="Zabarovsky E."/>
            <person name="Zhu S."/>
            <person name="Zimmer A."/>
            <person name="Hide W."/>
            <person name="Bult C."/>
            <person name="Grimmond S.M."/>
            <person name="Teasdale R.D."/>
            <person name="Liu E.T."/>
            <person name="Brusic V."/>
            <person name="Quackenbush J."/>
            <person name="Wahlestedt C."/>
            <person name="Mattick J.S."/>
            <person name="Hume D.A."/>
            <person name="Kai C."/>
            <person name="Sasaki D."/>
            <person name="Tomaru Y."/>
            <person name="Fukuda S."/>
            <person name="Kanamori-Katayama M."/>
            <person name="Suzuki M."/>
            <person name="Aoki J."/>
            <person name="Arakawa T."/>
            <person name="Iida J."/>
            <person name="Imamura K."/>
            <person name="Itoh M."/>
            <person name="Kato T."/>
            <person name="Kawaji H."/>
            <person name="Kawagashira N."/>
            <person name="Kawashima T."/>
            <person name="Kojima M."/>
            <person name="Kondo S."/>
            <person name="Konno H."/>
            <person name="Nakano K."/>
            <person name="Ninomiya N."/>
            <person name="Nishio T."/>
            <person name="Okada M."/>
            <person name="Plessy C."/>
            <person name="Shibata K."/>
            <person name="Shiraki T."/>
            <person name="Suzuki S."/>
            <person name="Tagami M."/>
            <person name="Waki K."/>
            <person name="Watahiki A."/>
            <person name="Okamura-Oho Y."/>
            <person name="Suzuki H."/>
            <person name="Kawai J."/>
            <person name="Hayashizaki Y."/>
        </authorList>
    </citation>
    <scope>NUCLEOTIDE SEQUENCE [LARGE SCALE MRNA] OF 1464-4555 (ISOFORM 2)</scope>
    <source>
        <strain>C57BL/6J</strain>
        <tissue>Eye</tissue>
    </source>
</reference>
<reference key="4">
    <citation type="journal article" date="2005" name="Dev. Dyn.">
        <title>Expression of mouse dchs1, fjx1, and fat-j suggests conservation of the planar cell polarity pathway identified in Drosophila.</title>
        <authorList>
            <person name="Rock R."/>
            <person name="Schrauth S."/>
            <person name="Gessler M."/>
        </authorList>
    </citation>
    <scope>POSSIBLE FUNCTION</scope>
    <scope>TISSUE SPECIFICITY</scope>
</reference>
<reference key="5">
    <citation type="journal article" date="2007" name="Dev. Dyn.">
        <title>Temporal and spatial expression profiles of the Fat3 protein, a giant cadherin molecule, during mouse development.</title>
        <authorList>
            <person name="Nagae S."/>
            <person name="Tanoue T."/>
            <person name="Takeichi M."/>
        </authorList>
    </citation>
    <scope>TISSUE SPECIFICITY</scope>
</reference>
<reference key="6">
    <citation type="journal article" date="2010" name="Cell">
        <title>A tissue-specific atlas of mouse protein phosphorylation and expression.</title>
        <authorList>
            <person name="Huttlin E.L."/>
            <person name="Jedrychowski M.P."/>
            <person name="Elias J.E."/>
            <person name="Goswami T."/>
            <person name="Rad R."/>
            <person name="Beausoleil S.A."/>
            <person name="Villen J."/>
            <person name="Haas W."/>
            <person name="Sowa M.E."/>
            <person name="Gygi S.P."/>
        </authorList>
    </citation>
    <scope>IDENTIFICATION BY MASS SPECTROMETRY [LARGE SCALE ANALYSIS]</scope>
    <source>
        <tissue>Brain</tissue>
        <tissue>Lung</tissue>
    </source>
</reference>
<reference key="7">
    <citation type="journal article" date="2014" name="Mol. Cell. Proteomics">
        <title>Immunoaffinity enrichment and mass spectrometry analysis of protein methylation.</title>
        <authorList>
            <person name="Guo A."/>
            <person name="Gu H."/>
            <person name="Zhou J."/>
            <person name="Mulhern D."/>
            <person name="Wang Y."/>
            <person name="Lee K.A."/>
            <person name="Yang V."/>
            <person name="Aguiar M."/>
            <person name="Kornhauser J."/>
            <person name="Jia X."/>
            <person name="Ren J."/>
            <person name="Beausoleil S.A."/>
            <person name="Silva J.C."/>
            <person name="Vemulapalli V."/>
            <person name="Bedford M.T."/>
            <person name="Comb M.J."/>
        </authorList>
    </citation>
    <scope>METHYLATION [LARGE SCALE ANALYSIS] AT ARG-4508 AND ARG-4518</scope>
    <scope>IDENTIFICATION BY MASS SPECTROMETRY [LARGE SCALE ANALYSIS]</scope>
    <source>
        <tissue>Embryo</tissue>
    </source>
</reference>
<feature type="signal peptide" evidence="2">
    <location>
        <begin position="1"/>
        <end position="31"/>
    </location>
</feature>
<feature type="chain" id="PRO_0000324635" description="Protocadherin Fat 3">
    <location>
        <begin position="32"/>
        <end position="4555"/>
    </location>
</feature>
<feature type="topological domain" description="Extracellular" evidence="2">
    <location>
        <begin position="32"/>
        <end position="4153"/>
    </location>
</feature>
<feature type="transmembrane region" description="Helical" evidence="2">
    <location>
        <begin position="4154"/>
        <end position="4174"/>
    </location>
</feature>
<feature type="topological domain" description="Cytoplasmic" evidence="2">
    <location>
        <begin position="4175"/>
        <end position="4555"/>
    </location>
</feature>
<feature type="domain" description="Cadherin 1" evidence="3">
    <location>
        <begin position="43"/>
        <end position="157"/>
    </location>
</feature>
<feature type="domain" description="Cadherin 2" evidence="3">
    <location>
        <begin position="158"/>
        <end position="262"/>
    </location>
</feature>
<feature type="domain" description="Cadherin 3" evidence="3">
    <location>
        <begin position="263"/>
        <end position="374"/>
    </location>
</feature>
<feature type="domain" description="Cadherin 4" evidence="3">
    <location>
        <begin position="376"/>
        <end position="471"/>
    </location>
</feature>
<feature type="domain" description="Cadherin 5" evidence="3">
    <location>
        <begin position="472"/>
        <end position="577"/>
    </location>
</feature>
<feature type="domain" description="Cadherin 6" evidence="3">
    <location>
        <begin position="578"/>
        <end position="680"/>
    </location>
</feature>
<feature type="domain" description="Cadherin 7" evidence="3">
    <location>
        <begin position="726"/>
        <end position="830"/>
    </location>
</feature>
<feature type="domain" description="Cadherin 8" evidence="3">
    <location>
        <begin position="831"/>
        <end position="935"/>
    </location>
</feature>
<feature type="domain" description="Cadherin 9" evidence="3">
    <location>
        <begin position="936"/>
        <end position="1042"/>
    </location>
</feature>
<feature type="domain" description="Cadherin 10" evidence="3">
    <location>
        <begin position="1043"/>
        <end position="1147"/>
    </location>
</feature>
<feature type="domain" description="Cadherin 11" evidence="3">
    <location>
        <begin position="1148"/>
        <end position="1253"/>
    </location>
</feature>
<feature type="domain" description="Cadherin 12" evidence="3">
    <location>
        <begin position="1254"/>
        <end position="1358"/>
    </location>
</feature>
<feature type="domain" description="Cadherin 13" evidence="3">
    <location>
        <begin position="1362"/>
        <end position="1459"/>
    </location>
</feature>
<feature type="domain" description="Cadherin 14" evidence="3">
    <location>
        <begin position="1460"/>
        <end position="1565"/>
    </location>
</feature>
<feature type="domain" description="Cadherin 15" evidence="3">
    <location>
        <begin position="1566"/>
        <end position="1768"/>
    </location>
</feature>
<feature type="domain" description="Cadherin 16" evidence="3">
    <location>
        <begin position="1769"/>
        <end position="1882"/>
    </location>
</feature>
<feature type="domain" description="Cadherin 17" evidence="3">
    <location>
        <begin position="1883"/>
        <end position="1985"/>
    </location>
</feature>
<feature type="domain" description="Cadherin 18" evidence="3">
    <location>
        <begin position="1982"/>
        <end position="2083"/>
    </location>
</feature>
<feature type="domain" description="Cadherin 19" evidence="3">
    <location>
        <begin position="2084"/>
        <end position="2185"/>
    </location>
</feature>
<feature type="domain" description="Cadherin 20" evidence="3">
    <location>
        <begin position="2186"/>
        <end position="2286"/>
    </location>
</feature>
<feature type="domain" description="Cadherin 21" evidence="3">
    <location>
        <begin position="2287"/>
        <end position="2393"/>
    </location>
</feature>
<feature type="domain" description="Cadherin 22" evidence="3">
    <location>
        <begin position="2394"/>
        <end position="2495"/>
    </location>
</feature>
<feature type="domain" description="Cadherin 23" evidence="3">
    <location>
        <begin position="2496"/>
        <end position="2599"/>
    </location>
</feature>
<feature type="domain" description="Cadherin 24" evidence="3">
    <location>
        <begin position="2600"/>
        <end position="2707"/>
    </location>
</feature>
<feature type="domain" description="Cadherin 25" evidence="3">
    <location>
        <begin position="2708"/>
        <end position="2813"/>
    </location>
</feature>
<feature type="domain" description="Cadherin 26" evidence="3">
    <location>
        <begin position="2814"/>
        <end position="2923"/>
    </location>
</feature>
<feature type="domain" description="Cadherin 27" evidence="3">
    <location>
        <begin position="2924"/>
        <end position="3028"/>
    </location>
</feature>
<feature type="domain" description="Cadherin 28" evidence="3">
    <location>
        <begin position="3029"/>
        <end position="3130"/>
    </location>
</feature>
<feature type="domain" description="Cadherin 29" evidence="3">
    <location>
        <begin position="3131"/>
        <end position="3235"/>
    </location>
</feature>
<feature type="domain" description="Cadherin 30" evidence="3">
    <location>
        <begin position="3236"/>
        <end position="3340"/>
    </location>
</feature>
<feature type="domain" description="Cadherin 31" evidence="3">
    <location>
        <begin position="3341"/>
        <end position="3445"/>
    </location>
</feature>
<feature type="domain" description="Cadherin 32" evidence="3">
    <location>
        <begin position="3446"/>
        <end position="3550"/>
    </location>
</feature>
<feature type="domain" description="Cadherin 33" evidence="3">
    <location>
        <begin position="3551"/>
        <end position="3660"/>
    </location>
</feature>
<feature type="domain" description="EGF-like 1" evidence="4">
    <location>
        <begin position="3794"/>
        <end position="3832"/>
    </location>
</feature>
<feature type="domain" description="Laminin G-like" evidence="5">
    <location>
        <begin position="3834"/>
        <end position="4017"/>
    </location>
</feature>
<feature type="domain" description="EGF-like 2" evidence="4">
    <location>
        <begin position="4020"/>
        <end position="4057"/>
    </location>
</feature>
<feature type="domain" description="EGF-like 3" evidence="4">
    <location>
        <begin position="4059"/>
        <end position="4095"/>
    </location>
</feature>
<feature type="domain" description="EGF-like 4; calcium-binding" evidence="4">
    <location>
        <begin position="4097"/>
        <end position="4133"/>
    </location>
</feature>
<feature type="region of interest" description="Disordered" evidence="6">
    <location>
        <begin position="4300"/>
        <end position="4353"/>
    </location>
</feature>
<feature type="region of interest" description="Disordered" evidence="6">
    <location>
        <begin position="4395"/>
        <end position="4474"/>
    </location>
</feature>
<feature type="compositionally biased region" description="Polar residues" evidence="6">
    <location>
        <begin position="4322"/>
        <end position="4343"/>
    </location>
</feature>
<feature type="modified residue" description="Omega-N-methylarginine" evidence="12">
    <location>
        <position position="4508"/>
    </location>
</feature>
<feature type="modified residue" description="Omega-N-methylarginine" evidence="12">
    <location>
        <position position="4518"/>
    </location>
</feature>
<feature type="glycosylation site" description="N-linked (GlcNAc...) asparagine" evidence="2">
    <location>
        <position position="48"/>
    </location>
</feature>
<feature type="glycosylation site" description="N-linked (GlcNAc...) asparagine" evidence="2">
    <location>
        <position position="341"/>
    </location>
</feature>
<feature type="glycosylation site" description="N-linked (GlcNAc...) asparagine" evidence="2">
    <location>
        <position position="481"/>
    </location>
</feature>
<feature type="glycosylation site" description="N-linked (GlcNAc...) asparagine" evidence="2">
    <location>
        <position position="562"/>
    </location>
</feature>
<feature type="glycosylation site" description="N-linked (GlcNAc...) asparagine" evidence="2">
    <location>
        <position position="667"/>
    </location>
</feature>
<feature type="glycosylation site" description="N-linked (GlcNAc...) asparagine" evidence="2">
    <location>
        <position position="799"/>
    </location>
</feature>
<feature type="glycosylation site" description="N-linked (GlcNAc...) asparagine" evidence="2">
    <location>
        <position position="879"/>
    </location>
</feature>
<feature type="glycosylation site" description="N-linked (GlcNAc...) asparagine" evidence="2">
    <location>
        <position position="898"/>
    </location>
</feature>
<feature type="glycosylation site" description="N-linked (GlcNAc...) asparagine" evidence="2">
    <location>
        <position position="1006"/>
    </location>
</feature>
<feature type="glycosylation site" description="N-linked (GlcNAc...) asparagine" evidence="2">
    <location>
        <position position="1367"/>
    </location>
</feature>
<feature type="glycosylation site" description="N-linked (GlcNAc...) asparagine" evidence="2">
    <location>
        <position position="1429"/>
    </location>
</feature>
<feature type="glycosylation site" description="N-linked (GlcNAc...) asparagine" evidence="2">
    <location>
        <position position="1751"/>
    </location>
</feature>
<feature type="glycosylation site" description="N-linked (GlcNAc...) asparagine" evidence="2">
    <location>
        <position position="1944"/>
    </location>
</feature>
<feature type="glycosylation site" description="N-linked (GlcNAc...) asparagine" evidence="2">
    <location>
        <position position="1993"/>
    </location>
</feature>
<feature type="glycosylation site" description="N-linked (GlcNAc...) asparagine" evidence="2">
    <location>
        <position position="1996"/>
    </location>
</feature>
<feature type="glycosylation site" description="N-linked (GlcNAc...) asparagine" evidence="2">
    <location>
        <position position="2208"/>
    </location>
</feature>
<feature type="glycosylation site" description="N-linked (GlcNAc...) asparagine" evidence="2">
    <location>
        <position position="2292"/>
    </location>
</feature>
<feature type="glycosylation site" description="N-linked (GlcNAc...) asparagine" evidence="2">
    <location>
        <position position="2331"/>
    </location>
</feature>
<feature type="glycosylation site" description="N-linked (GlcNAc...) asparagine" evidence="2">
    <location>
        <position position="2467"/>
    </location>
</feature>
<feature type="glycosylation site" description="N-linked (GlcNAc...) asparagine" evidence="2">
    <location>
        <position position="2734"/>
    </location>
</feature>
<feature type="glycosylation site" description="N-linked (GlcNAc...) asparagine" evidence="2">
    <location>
        <position position="3000"/>
    </location>
</feature>
<feature type="glycosylation site" description="N-linked (GlcNAc...) asparagine" evidence="2">
    <location>
        <position position="3201"/>
    </location>
</feature>
<feature type="glycosylation site" description="N-linked (GlcNAc...) asparagine" evidence="2">
    <location>
        <position position="3449"/>
    </location>
</feature>
<feature type="glycosylation site" description="N-linked (GlcNAc...) asparagine" evidence="2">
    <location>
        <position position="3618"/>
    </location>
</feature>
<feature type="glycosylation site" description="N-linked (GlcNAc...) asparagine" evidence="2">
    <location>
        <position position="3741"/>
    </location>
</feature>
<feature type="glycosylation site" description="N-linked (GlcNAc...) asparagine" evidence="2">
    <location>
        <position position="3926"/>
    </location>
</feature>
<feature type="disulfide bond" evidence="1">
    <location>
        <begin position="3798"/>
        <end position="3809"/>
    </location>
</feature>
<feature type="disulfide bond" evidence="1">
    <location>
        <begin position="3803"/>
        <end position="3821"/>
    </location>
</feature>
<feature type="disulfide bond" evidence="1">
    <location>
        <begin position="3823"/>
        <end position="3831"/>
    </location>
</feature>
<feature type="disulfide bond" evidence="1">
    <location>
        <begin position="3984"/>
        <end position="4017"/>
    </location>
</feature>
<feature type="disulfide bond" evidence="1">
    <location>
        <begin position="4024"/>
        <end position="4035"/>
    </location>
</feature>
<feature type="disulfide bond" evidence="1">
    <location>
        <begin position="4029"/>
        <end position="4045"/>
    </location>
</feature>
<feature type="disulfide bond" evidence="1">
    <location>
        <begin position="4047"/>
        <end position="4056"/>
    </location>
</feature>
<feature type="disulfide bond" evidence="1">
    <location>
        <begin position="4063"/>
        <end position="4074"/>
    </location>
</feature>
<feature type="disulfide bond" evidence="1">
    <location>
        <begin position="4068"/>
        <end position="4083"/>
    </location>
</feature>
<feature type="disulfide bond" evidence="1">
    <location>
        <begin position="4085"/>
        <end position="4094"/>
    </location>
</feature>
<feature type="disulfide bond" evidence="1">
    <location>
        <begin position="4101"/>
        <end position="4112"/>
    </location>
</feature>
<feature type="disulfide bond" evidence="1">
    <location>
        <begin position="4106"/>
        <end position="4121"/>
    </location>
</feature>
<feature type="disulfide bond" evidence="1">
    <location>
        <begin position="4123"/>
        <end position="4132"/>
    </location>
</feature>
<feature type="splice variant" id="VSP_032329" description="In isoform 3." evidence="9">
    <location>
        <begin position="1"/>
        <end position="3806"/>
    </location>
</feature>
<feature type="splice variant" id="VSP_032330" description="In isoform 2." evidence="10">
    <original>RDQEFPYRRNLARVIVNVEDANDHSPYFTNPLYEASVFESAALGSVVLQVTALD</original>
    <variation>GPDLGFCSPGRTVNQPRHIPQEARAFKFYRPSFCTARLHAVLPLYFNEEVTVLR</variation>
    <location>
        <begin position="1538"/>
        <end position="1591"/>
    </location>
</feature>
<feature type="splice variant" id="VSP_032331" description="In isoform 2." evidence="10">
    <location>
        <begin position="1592"/>
        <end position="4555"/>
    </location>
</feature>
<feature type="splice variant" id="VSP_032332" description="In isoform 3." evidence="9">
    <original>YQCSCLSQFTGTNCESEITACFPNPCRNGGSCDPIGNTFVCSCKAGLTGVTCEDDVDECEREECENGGSCVNLFGSFFC</original>
    <variation>ECTSVQARGGSAPEVCPLHSQPLPPSPGPSQKGWSFGYNFTSAFMGWRSGPAMVGRELRGRGLWSTLEKRGEGTWGNLN</variation>
    <location>
        <begin position="4043"/>
        <end position="4121"/>
    </location>
</feature>
<feature type="splice variant" id="VSP_032333" description="In isoform 3." evidence="9">
    <location>
        <begin position="4122"/>
        <end position="4555"/>
    </location>
</feature>
<organism>
    <name type="scientific">Mus musculus</name>
    <name type="common">Mouse</name>
    <dbReference type="NCBI Taxonomy" id="10090"/>
    <lineage>
        <taxon>Eukaryota</taxon>
        <taxon>Metazoa</taxon>
        <taxon>Chordata</taxon>
        <taxon>Craniata</taxon>
        <taxon>Vertebrata</taxon>
        <taxon>Euteleostomi</taxon>
        <taxon>Mammalia</taxon>
        <taxon>Eutheria</taxon>
        <taxon>Euarchontoglires</taxon>
        <taxon>Glires</taxon>
        <taxon>Rodentia</taxon>
        <taxon>Myomorpha</taxon>
        <taxon>Muroidea</taxon>
        <taxon>Muridae</taxon>
        <taxon>Murinae</taxon>
        <taxon>Mus</taxon>
        <taxon>Mus</taxon>
    </lineage>
</organism>